<feature type="chain" id="PRO_0000175109" description="Coproporphyrin III ferrochelatase 2">
    <location>
        <begin position="1"/>
        <end position="319"/>
    </location>
</feature>
<feature type="binding site" description="axial binding residue" evidence="1">
    <location>
        <position position="13"/>
    </location>
    <ligand>
        <name>Fe-coproporphyrin III</name>
        <dbReference type="ChEBI" id="CHEBI:68438"/>
    </ligand>
    <ligandPart>
        <name>Fe</name>
        <dbReference type="ChEBI" id="CHEBI:18248"/>
    </ligandPart>
</feature>
<feature type="binding site" evidence="1">
    <location>
        <position position="30"/>
    </location>
    <ligand>
        <name>Fe-coproporphyrin III</name>
        <dbReference type="ChEBI" id="CHEBI:68438"/>
    </ligand>
</feature>
<feature type="binding site" evidence="1">
    <location>
        <begin position="46"/>
        <end position="47"/>
    </location>
    <ligand>
        <name>Fe-coproporphyrin III</name>
        <dbReference type="ChEBI" id="CHEBI:68438"/>
    </ligand>
</feature>
<feature type="binding site" evidence="1">
    <location>
        <position position="54"/>
    </location>
    <ligand>
        <name>Fe-coproporphyrin III</name>
        <dbReference type="ChEBI" id="CHEBI:68438"/>
    </ligand>
</feature>
<feature type="binding site" evidence="1">
    <location>
        <position position="125"/>
    </location>
    <ligand>
        <name>Fe-coproporphyrin III</name>
        <dbReference type="ChEBI" id="CHEBI:68438"/>
    </ligand>
</feature>
<feature type="binding site" evidence="1">
    <location>
        <position position="181"/>
    </location>
    <ligand>
        <name>Fe(2+)</name>
        <dbReference type="ChEBI" id="CHEBI:29033"/>
    </ligand>
</feature>
<feature type="binding site" evidence="1">
    <location>
        <position position="262"/>
    </location>
    <ligand>
        <name>Fe(2+)</name>
        <dbReference type="ChEBI" id="CHEBI:29033"/>
    </ligand>
</feature>
<organism>
    <name type="scientific">Bacillus cereus (strain ZK / E33L)</name>
    <dbReference type="NCBI Taxonomy" id="288681"/>
    <lineage>
        <taxon>Bacteria</taxon>
        <taxon>Bacillati</taxon>
        <taxon>Bacillota</taxon>
        <taxon>Bacilli</taxon>
        <taxon>Bacillales</taxon>
        <taxon>Bacillaceae</taxon>
        <taxon>Bacillus</taxon>
        <taxon>Bacillus cereus group</taxon>
    </lineage>
</organism>
<proteinExistence type="inferred from homology"/>
<dbReference type="EC" id="4.99.1.9" evidence="1"/>
<dbReference type="EMBL" id="CP000001">
    <property type="protein sequence ID" value="AAU19192.1"/>
    <property type="molecule type" value="Genomic_DNA"/>
</dbReference>
<dbReference type="RefSeq" id="WP_000727380.1">
    <property type="nucleotide sequence ID" value="NC_006274.1"/>
</dbReference>
<dbReference type="SMR" id="Q63EK7"/>
<dbReference type="KEGG" id="bcz:BCE33L1054"/>
<dbReference type="PATRIC" id="fig|288681.22.peg.4512"/>
<dbReference type="UniPathway" id="UPA00252"/>
<dbReference type="Proteomes" id="UP000002612">
    <property type="component" value="Chromosome"/>
</dbReference>
<dbReference type="GO" id="GO:0005737">
    <property type="term" value="C:cytoplasm"/>
    <property type="evidence" value="ECO:0007669"/>
    <property type="project" value="UniProtKB-SubCell"/>
</dbReference>
<dbReference type="GO" id="GO:0004325">
    <property type="term" value="F:ferrochelatase activity"/>
    <property type="evidence" value="ECO:0007669"/>
    <property type="project" value="UniProtKB-UniRule"/>
</dbReference>
<dbReference type="GO" id="GO:0046872">
    <property type="term" value="F:metal ion binding"/>
    <property type="evidence" value="ECO:0007669"/>
    <property type="project" value="UniProtKB-KW"/>
</dbReference>
<dbReference type="GO" id="GO:0006783">
    <property type="term" value="P:heme biosynthetic process"/>
    <property type="evidence" value="ECO:0007669"/>
    <property type="project" value="UniProtKB-UniRule"/>
</dbReference>
<dbReference type="CDD" id="cd00419">
    <property type="entry name" value="Ferrochelatase_C"/>
    <property type="match status" value="1"/>
</dbReference>
<dbReference type="CDD" id="cd03411">
    <property type="entry name" value="Ferrochelatase_N"/>
    <property type="match status" value="1"/>
</dbReference>
<dbReference type="FunFam" id="3.40.50.1400:FF:000009">
    <property type="entry name" value="Ferrochelatase"/>
    <property type="match status" value="1"/>
</dbReference>
<dbReference type="Gene3D" id="3.40.50.1400">
    <property type="match status" value="2"/>
</dbReference>
<dbReference type="HAMAP" id="MF_00323">
    <property type="entry name" value="Ferrochelatase"/>
    <property type="match status" value="1"/>
</dbReference>
<dbReference type="InterPro" id="IPR001015">
    <property type="entry name" value="Ferrochelatase"/>
</dbReference>
<dbReference type="InterPro" id="IPR019772">
    <property type="entry name" value="Ferrochelatase_AS"/>
</dbReference>
<dbReference type="InterPro" id="IPR033644">
    <property type="entry name" value="Ferrochelatase_C"/>
</dbReference>
<dbReference type="InterPro" id="IPR033659">
    <property type="entry name" value="Ferrochelatase_N"/>
</dbReference>
<dbReference type="NCBIfam" id="TIGR00109">
    <property type="entry name" value="hemH"/>
    <property type="match status" value="1"/>
</dbReference>
<dbReference type="NCBIfam" id="NF009095">
    <property type="entry name" value="PRK12435.1"/>
    <property type="match status" value="1"/>
</dbReference>
<dbReference type="PANTHER" id="PTHR11108">
    <property type="entry name" value="FERROCHELATASE"/>
    <property type="match status" value="1"/>
</dbReference>
<dbReference type="PANTHER" id="PTHR11108:SF1">
    <property type="entry name" value="FERROCHELATASE, MITOCHONDRIAL"/>
    <property type="match status" value="1"/>
</dbReference>
<dbReference type="Pfam" id="PF00762">
    <property type="entry name" value="Ferrochelatase"/>
    <property type="match status" value="1"/>
</dbReference>
<dbReference type="SUPFAM" id="SSF53800">
    <property type="entry name" value="Chelatase"/>
    <property type="match status" value="1"/>
</dbReference>
<dbReference type="PROSITE" id="PS00534">
    <property type="entry name" value="FERROCHELATASE"/>
    <property type="match status" value="1"/>
</dbReference>
<sequence length="319" mass="36315">MKKKKIGLLVMAYGTPESLEDVEAYYTHIRHGRKPSEEALQDLIGRYKAIGGISPLAKITKEQAHKLTDSMNNMFTEYEFNCYLGLKHTAPFIEDAVEEMKRDGIEQAISIVLAPHYSTFSIKAYNERAIRLSEEIGGPVIEPIDQWYDEPKFISYWADQIKETFTKIEDKEKAVVIFSAHSLPEKIIAAGDPYVEQLQHTADLIAAAANIQNYTIGWQSAGNTSDPWIGPDVQDLTRELFEEHRYEAFIYCPVGFVAEHLEVLYDNDYECKVVTDELNAAYFRPNMPNAQSTFIDCLATIVSKKMKEIVDKELILNNN</sequence>
<gene>
    <name evidence="1" type="primary">cpfC2</name>
    <name type="ordered locus">BCE33L1054</name>
</gene>
<reference key="1">
    <citation type="journal article" date="2006" name="J. Bacteriol.">
        <title>Pathogenomic sequence analysis of Bacillus cereus and Bacillus thuringiensis isolates closely related to Bacillus anthracis.</title>
        <authorList>
            <person name="Han C.S."/>
            <person name="Xie G."/>
            <person name="Challacombe J.F."/>
            <person name="Altherr M.R."/>
            <person name="Bhotika S.S."/>
            <person name="Bruce D."/>
            <person name="Campbell C.S."/>
            <person name="Campbell M.L."/>
            <person name="Chen J."/>
            <person name="Chertkov O."/>
            <person name="Cleland C."/>
            <person name="Dimitrijevic M."/>
            <person name="Doggett N.A."/>
            <person name="Fawcett J.J."/>
            <person name="Glavina T."/>
            <person name="Goodwin L.A."/>
            <person name="Hill K.K."/>
            <person name="Hitchcock P."/>
            <person name="Jackson P.J."/>
            <person name="Keim P."/>
            <person name="Kewalramani A.R."/>
            <person name="Longmire J."/>
            <person name="Lucas S."/>
            <person name="Malfatti S."/>
            <person name="McMurry K."/>
            <person name="Meincke L.J."/>
            <person name="Misra M."/>
            <person name="Moseman B.L."/>
            <person name="Mundt M."/>
            <person name="Munk A.C."/>
            <person name="Okinaka R.T."/>
            <person name="Parson-Quintana B."/>
            <person name="Reilly L.P."/>
            <person name="Richardson P."/>
            <person name="Robinson D.L."/>
            <person name="Rubin E."/>
            <person name="Saunders E."/>
            <person name="Tapia R."/>
            <person name="Tesmer J.G."/>
            <person name="Thayer N."/>
            <person name="Thompson L.S."/>
            <person name="Tice H."/>
            <person name="Ticknor L.O."/>
            <person name="Wills P.L."/>
            <person name="Brettin T.S."/>
            <person name="Gilna P."/>
        </authorList>
    </citation>
    <scope>NUCLEOTIDE SEQUENCE [LARGE SCALE GENOMIC DNA]</scope>
    <source>
        <strain>ZK / E33L</strain>
    </source>
</reference>
<protein>
    <recommendedName>
        <fullName evidence="1">Coproporphyrin III ferrochelatase 2</fullName>
        <ecNumber evidence="1">4.99.1.9</ecNumber>
    </recommendedName>
</protein>
<accession>Q63EK7</accession>
<comment type="function">
    <text evidence="1">Involved in coproporphyrin-dependent heme b biosynthesis. Catalyzes the insertion of ferrous iron into coproporphyrin III to form Fe-coproporphyrin III.</text>
</comment>
<comment type="catalytic activity">
    <reaction evidence="1">
        <text>Fe-coproporphyrin III + 2 H(+) = coproporphyrin III + Fe(2+)</text>
        <dbReference type="Rhea" id="RHEA:49572"/>
        <dbReference type="ChEBI" id="CHEBI:15378"/>
        <dbReference type="ChEBI" id="CHEBI:29033"/>
        <dbReference type="ChEBI" id="CHEBI:68438"/>
        <dbReference type="ChEBI" id="CHEBI:131725"/>
        <dbReference type="EC" id="4.99.1.9"/>
    </reaction>
    <physiologicalReaction direction="right-to-left" evidence="1">
        <dbReference type="Rhea" id="RHEA:49574"/>
    </physiologicalReaction>
</comment>
<comment type="pathway">
    <text evidence="1">Porphyrin-containing compound metabolism; protoheme biosynthesis.</text>
</comment>
<comment type="subcellular location">
    <subcellularLocation>
        <location evidence="1">Cytoplasm</location>
    </subcellularLocation>
</comment>
<comment type="similarity">
    <text evidence="1">Belongs to the ferrochelatase family.</text>
</comment>
<evidence type="ECO:0000255" key="1">
    <source>
        <dbReference type="HAMAP-Rule" id="MF_00323"/>
    </source>
</evidence>
<name>CPFC2_BACCZ</name>
<keyword id="KW-0963">Cytoplasm</keyword>
<keyword id="KW-0350">Heme biosynthesis</keyword>
<keyword id="KW-0408">Iron</keyword>
<keyword id="KW-0456">Lyase</keyword>
<keyword id="KW-0479">Metal-binding</keyword>
<keyword id="KW-0627">Porphyrin biosynthesis</keyword>